<dbReference type="EC" id="1.2.1.3"/>
<dbReference type="EMBL" id="CR860576">
    <property type="protein sequence ID" value="CAH92701.1"/>
    <property type="molecule type" value="mRNA"/>
</dbReference>
<dbReference type="RefSeq" id="NP_001127576.1">
    <property type="nucleotide sequence ID" value="NM_001134104.1"/>
</dbReference>
<dbReference type="SMR" id="Q5R6B5"/>
<dbReference type="FunCoup" id="Q5R6B5">
    <property type="interactions" value="1929"/>
</dbReference>
<dbReference type="STRING" id="9601.ENSPPYP00000021352"/>
<dbReference type="GeneID" id="100174654"/>
<dbReference type="KEGG" id="pon:100174654"/>
<dbReference type="eggNOG" id="KOG2450">
    <property type="taxonomic scope" value="Eukaryota"/>
</dbReference>
<dbReference type="InParanoid" id="Q5R6B5"/>
<dbReference type="OrthoDB" id="310895at2759"/>
<dbReference type="UniPathway" id="UPA00780">
    <property type="reaction ID" value="UER00768"/>
</dbReference>
<dbReference type="Proteomes" id="UP000001595">
    <property type="component" value="Unplaced"/>
</dbReference>
<dbReference type="GO" id="GO:0005759">
    <property type="term" value="C:mitochondrial matrix"/>
    <property type="evidence" value="ECO:0007669"/>
    <property type="project" value="UniProtKB-SubCell"/>
</dbReference>
<dbReference type="GO" id="GO:0004029">
    <property type="term" value="F:aldehyde dehydrogenase (NAD+) activity"/>
    <property type="evidence" value="ECO:0007669"/>
    <property type="project" value="UniProtKB-EC"/>
</dbReference>
<dbReference type="GO" id="GO:0006068">
    <property type="term" value="P:ethanol catabolic process"/>
    <property type="evidence" value="ECO:0007669"/>
    <property type="project" value="UniProtKB-UniPathway"/>
</dbReference>
<dbReference type="CDD" id="cd07141">
    <property type="entry name" value="ALDH_F1AB_F2_RALDH1"/>
    <property type="match status" value="1"/>
</dbReference>
<dbReference type="FunFam" id="3.40.605.10:FF:000029">
    <property type="entry name" value="Aldehyde dehydrogenase, mitochondrial"/>
    <property type="match status" value="1"/>
</dbReference>
<dbReference type="FunFam" id="3.40.605.10:FF:000026">
    <property type="entry name" value="Aldehyde dehydrogenase, putative"/>
    <property type="match status" value="1"/>
</dbReference>
<dbReference type="FunFam" id="3.40.309.10:FF:000001">
    <property type="entry name" value="Mitochondrial aldehyde dehydrogenase 2"/>
    <property type="match status" value="1"/>
</dbReference>
<dbReference type="Gene3D" id="3.40.605.10">
    <property type="entry name" value="Aldehyde Dehydrogenase, Chain A, domain 1"/>
    <property type="match status" value="1"/>
</dbReference>
<dbReference type="Gene3D" id="3.40.309.10">
    <property type="entry name" value="Aldehyde Dehydrogenase, Chain A, domain 2"/>
    <property type="match status" value="1"/>
</dbReference>
<dbReference type="InterPro" id="IPR016161">
    <property type="entry name" value="Ald_DH/histidinol_DH"/>
</dbReference>
<dbReference type="InterPro" id="IPR016163">
    <property type="entry name" value="Ald_DH_C"/>
</dbReference>
<dbReference type="InterPro" id="IPR016160">
    <property type="entry name" value="Ald_DH_CS_CYS"/>
</dbReference>
<dbReference type="InterPro" id="IPR029510">
    <property type="entry name" value="Ald_DH_CS_GLU"/>
</dbReference>
<dbReference type="InterPro" id="IPR016162">
    <property type="entry name" value="Ald_DH_N"/>
</dbReference>
<dbReference type="InterPro" id="IPR015590">
    <property type="entry name" value="Aldehyde_DH_dom"/>
</dbReference>
<dbReference type="PANTHER" id="PTHR11699">
    <property type="entry name" value="ALDEHYDE DEHYDROGENASE-RELATED"/>
    <property type="match status" value="1"/>
</dbReference>
<dbReference type="Pfam" id="PF00171">
    <property type="entry name" value="Aldedh"/>
    <property type="match status" value="1"/>
</dbReference>
<dbReference type="SUPFAM" id="SSF53720">
    <property type="entry name" value="ALDH-like"/>
    <property type="match status" value="1"/>
</dbReference>
<dbReference type="PROSITE" id="PS00070">
    <property type="entry name" value="ALDEHYDE_DEHYDR_CYS"/>
    <property type="match status" value="1"/>
</dbReference>
<dbReference type="PROSITE" id="PS00687">
    <property type="entry name" value="ALDEHYDE_DEHYDR_GLU"/>
    <property type="match status" value="1"/>
</dbReference>
<sequence length="517" mass="57261">MLRFLAPRLLSLQGRTARYSSAAALPSPILNPDIPYNQLFINNEWQDAVSKKTFPTVNPTTGEVIGHVAEGDRADVDRAVKAAREAFRLGSPWRRMDASERGRLLNCLADLVERDRVYLASLETLDNGKPFQESYALDLDEVIKVYRYFAGWADKWHGKTIPMDGQHFCFTRHEPIGVCGQIIPWNFPLVMQGWKLAPALATGNTVVMKVAEQTPLSALYLASLIKEAGFPPGVVNIITGYGPTAGAAIAQHMDVDKVAFTGSTEVGHLIQKAAGDSNLKRVTLELGGKSPSIVLADADMEHAVEQCHEALFFNMGQCCCAGSRTFVEESIYNEFLERTVEKAKQRKVGNPFELDTQQGPQVDKEQFERVLGYIQLGQKEGAKLLCGGERFGERGFFIKPTVFGGVQDDMRIAKEEIFGPVQPLFKFKKMEEVIERANTTRYGLAAAVFTRDLDKAMYFTQALQAGTVWVNTYNIVTCHTPFGGFKESGNGRELGEDGLKAYTEVKTVTIKVPQKNS</sequence>
<gene>
    <name type="primary">ALDH1B1</name>
    <name type="synonym">ALDHX</name>
</gene>
<name>AL1B1_PONAB</name>
<evidence type="ECO:0000250" key="1"/>
<evidence type="ECO:0000250" key="2">
    <source>
        <dbReference type="UniProtKB" id="Q9CZS1"/>
    </source>
</evidence>
<evidence type="ECO:0000255" key="3"/>
<evidence type="ECO:0000255" key="4">
    <source>
        <dbReference type="PROSITE-ProRule" id="PRU10007"/>
    </source>
</evidence>
<evidence type="ECO:0000255" key="5">
    <source>
        <dbReference type="PROSITE-ProRule" id="PRU10008"/>
    </source>
</evidence>
<evidence type="ECO:0000305" key="6"/>
<accession>Q5R6B5</accession>
<keyword id="KW-0007">Acetylation</keyword>
<keyword id="KW-0496">Mitochondrion</keyword>
<keyword id="KW-0520">NAD</keyword>
<keyword id="KW-0560">Oxidoreductase</keyword>
<keyword id="KW-1185">Reference proteome</keyword>
<keyword id="KW-0809">Transit peptide</keyword>
<proteinExistence type="evidence at transcript level"/>
<protein>
    <recommendedName>
        <fullName>Aldehyde dehydrogenase X, mitochondrial</fullName>
        <ecNumber>1.2.1.3</ecNumber>
    </recommendedName>
    <alternativeName>
        <fullName>Aldehyde dehydrogenase family 1 member B1</fullName>
    </alternativeName>
</protein>
<organism>
    <name type="scientific">Pongo abelii</name>
    <name type="common">Sumatran orangutan</name>
    <name type="synonym">Pongo pygmaeus abelii</name>
    <dbReference type="NCBI Taxonomy" id="9601"/>
    <lineage>
        <taxon>Eukaryota</taxon>
        <taxon>Metazoa</taxon>
        <taxon>Chordata</taxon>
        <taxon>Craniata</taxon>
        <taxon>Vertebrata</taxon>
        <taxon>Euteleostomi</taxon>
        <taxon>Mammalia</taxon>
        <taxon>Eutheria</taxon>
        <taxon>Euarchontoglires</taxon>
        <taxon>Primates</taxon>
        <taxon>Haplorrhini</taxon>
        <taxon>Catarrhini</taxon>
        <taxon>Hominidae</taxon>
        <taxon>Pongo</taxon>
    </lineage>
</organism>
<reference key="1">
    <citation type="submission" date="2004-11" db="EMBL/GenBank/DDBJ databases">
        <authorList>
            <consortium name="The German cDNA consortium"/>
        </authorList>
    </citation>
    <scope>NUCLEOTIDE SEQUENCE [LARGE SCALE MRNA]</scope>
    <source>
        <tissue>Brain cortex</tissue>
    </source>
</reference>
<feature type="transit peptide" description="Mitochondrion" evidence="3">
    <location>
        <begin position="1"/>
        <end position="17"/>
    </location>
</feature>
<feature type="chain" id="PRO_0000271412" description="Aldehyde dehydrogenase X, mitochondrial">
    <location>
        <begin position="18"/>
        <end position="517"/>
    </location>
</feature>
<feature type="active site" description="Proton acceptor" evidence="4 5">
    <location>
        <position position="285"/>
    </location>
</feature>
<feature type="active site" description="Nucleophile" evidence="4 5">
    <location>
        <position position="319"/>
    </location>
</feature>
<feature type="binding site" evidence="1">
    <location>
        <begin position="262"/>
        <end position="267"/>
    </location>
    <ligand>
        <name>NAD(+)</name>
        <dbReference type="ChEBI" id="CHEBI:57540"/>
    </ligand>
</feature>
<feature type="site" description="Transition state stabilizer" evidence="1">
    <location>
        <position position="186"/>
    </location>
</feature>
<feature type="modified residue" description="N6-acetyllysine" evidence="2">
    <location>
        <position position="51"/>
    </location>
</feature>
<feature type="modified residue" description="N6-acetyllysine; alternate" evidence="2">
    <location>
        <position position="52"/>
    </location>
</feature>
<feature type="modified residue" description="N6-succinyllysine; alternate" evidence="2">
    <location>
        <position position="52"/>
    </location>
</feature>
<feature type="modified residue" description="N6-succinyllysine" evidence="2">
    <location>
        <position position="81"/>
    </location>
</feature>
<feature type="modified residue" description="N6-acetyllysine; alternate" evidence="2">
    <location>
        <position position="364"/>
    </location>
</feature>
<feature type="modified residue" description="N6-succinyllysine; alternate" evidence="2">
    <location>
        <position position="364"/>
    </location>
</feature>
<feature type="modified residue" description="N6-acetyllysine; alternate" evidence="2">
    <location>
        <position position="383"/>
    </location>
</feature>
<feature type="modified residue" description="N6-succinyllysine; alternate" evidence="2">
    <location>
        <position position="383"/>
    </location>
</feature>
<feature type="modified residue" description="N6-acetyllysine; alternate" evidence="2">
    <location>
        <position position="399"/>
    </location>
</feature>
<feature type="modified residue" description="N6-succinyllysine; alternate" evidence="2">
    <location>
        <position position="399"/>
    </location>
</feature>
<feature type="modified residue" description="N6-acetyllysine; alternate" evidence="2">
    <location>
        <position position="414"/>
    </location>
</feature>
<feature type="modified residue" description="N6-succinyllysine; alternate" evidence="2">
    <location>
        <position position="414"/>
    </location>
</feature>
<feature type="modified residue" description="N6-acetyllysine; alternate" evidence="2">
    <location>
        <position position="426"/>
    </location>
</feature>
<feature type="modified residue" description="N6-succinyllysine; alternate" evidence="2">
    <location>
        <position position="426"/>
    </location>
</feature>
<feature type="modified residue" description="N6-acetyllysine" evidence="2">
    <location>
        <position position="429"/>
    </location>
</feature>
<comment type="function">
    <text evidence="1">ALDHs play a major role in the detoxification of alcohol-derived acetaldehyde. They are involved in the metabolism of corticosteroids, biogenic amines, neurotransmitters, and lipid peroxidation (By similarity).</text>
</comment>
<comment type="catalytic activity">
    <reaction>
        <text>an aldehyde + NAD(+) + H2O = a carboxylate + NADH + 2 H(+)</text>
        <dbReference type="Rhea" id="RHEA:16185"/>
        <dbReference type="ChEBI" id="CHEBI:15377"/>
        <dbReference type="ChEBI" id="CHEBI:15378"/>
        <dbReference type="ChEBI" id="CHEBI:17478"/>
        <dbReference type="ChEBI" id="CHEBI:29067"/>
        <dbReference type="ChEBI" id="CHEBI:57540"/>
        <dbReference type="ChEBI" id="CHEBI:57945"/>
        <dbReference type="EC" id="1.2.1.3"/>
    </reaction>
</comment>
<comment type="pathway">
    <text>Alcohol metabolism; ethanol degradation; acetate from ethanol: step 2/2.</text>
</comment>
<comment type="subunit">
    <text evidence="1">Homotetramer.</text>
</comment>
<comment type="subcellular location">
    <subcellularLocation>
        <location evidence="1">Mitochondrion matrix</location>
    </subcellularLocation>
</comment>
<comment type="similarity">
    <text evidence="6">Belongs to the aldehyde dehydrogenase family.</text>
</comment>